<proteinExistence type="inferred from homology"/>
<dbReference type="EMBL" id="K03454">
    <property type="protein sequence ID" value="AAA44324.1"/>
    <property type="molecule type" value="Genomic_DNA"/>
</dbReference>
<dbReference type="SMR" id="P04592"/>
<dbReference type="PRO" id="PR:P04592"/>
<dbReference type="Proteomes" id="UP000007693">
    <property type="component" value="Segment"/>
</dbReference>
<dbReference type="GO" id="GO:0042025">
    <property type="term" value="C:host cell nucleus"/>
    <property type="evidence" value="ECO:0007669"/>
    <property type="project" value="UniProtKB-SubCell"/>
</dbReference>
<dbReference type="GO" id="GO:0020002">
    <property type="term" value="C:host cell plasma membrane"/>
    <property type="evidence" value="ECO:0007669"/>
    <property type="project" value="UniProtKB-SubCell"/>
</dbReference>
<dbReference type="GO" id="GO:0072494">
    <property type="term" value="C:host multivesicular body"/>
    <property type="evidence" value="ECO:0007669"/>
    <property type="project" value="UniProtKB-SubCell"/>
</dbReference>
<dbReference type="GO" id="GO:0016020">
    <property type="term" value="C:membrane"/>
    <property type="evidence" value="ECO:0007669"/>
    <property type="project" value="UniProtKB-KW"/>
</dbReference>
<dbReference type="GO" id="GO:0019013">
    <property type="term" value="C:viral nucleocapsid"/>
    <property type="evidence" value="ECO:0007669"/>
    <property type="project" value="UniProtKB-KW"/>
</dbReference>
<dbReference type="GO" id="GO:0055036">
    <property type="term" value="C:virion membrane"/>
    <property type="evidence" value="ECO:0007669"/>
    <property type="project" value="UniProtKB-SubCell"/>
</dbReference>
<dbReference type="GO" id="GO:0003723">
    <property type="term" value="F:RNA binding"/>
    <property type="evidence" value="ECO:0007669"/>
    <property type="project" value="UniProtKB-KW"/>
</dbReference>
<dbReference type="GO" id="GO:0005198">
    <property type="term" value="F:structural molecule activity"/>
    <property type="evidence" value="ECO:0007669"/>
    <property type="project" value="InterPro"/>
</dbReference>
<dbReference type="GO" id="GO:0008270">
    <property type="term" value="F:zinc ion binding"/>
    <property type="evidence" value="ECO:0007669"/>
    <property type="project" value="UniProtKB-KW"/>
</dbReference>
<dbReference type="GO" id="GO:0039702">
    <property type="term" value="P:viral budding via host ESCRT complex"/>
    <property type="evidence" value="ECO:0007669"/>
    <property type="project" value="UniProtKB-KW"/>
</dbReference>
<dbReference type="GO" id="GO:0075523">
    <property type="term" value="P:viral translational frameshifting"/>
    <property type="evidence" value="ECO:0007669"/>
    <property type="project" value="UniProtKB-KW"/>
</dbReference>
<dbReference type="FunFam" id="1.10.1200.30:FF:000001">
    <property type="entry name" value="Gag polyprotein"/>
    <property type="match status" value="1"/>
</dbReference>
<dbReference type="FunFam" id="1.10.150.90:FF:000001">
    <property type="entry name" value="Gag polyprotein"/>
    <property type="match status" value="1"/>
</dbReference>
<dbReference type="FunFam" id="1.10.375.10:FF:000001">
    <property type="entry name" value="Gag polyprotein"/>
    <property type="match status" value="1"/>
</dbReference>
<dbReference type="FunFam" id="4.10.60.10:FF:000001">
    <property type="entry name" value="Gag polyprotein"/>
    <property type="match status" value="1"/>
</dbReference>
<dbReference type="Gene3D" id="1.10.1200.30">
    <property type="match status" value="1"/>
</dbReference>
<dbReference type="Gene3D" id="6.10.250.390">
    <property type="match status" value="1"/>
</dbReference>
<dbReference type="Gene3D" id="1.10.375.10">
    <property type="entry name" value="Human Immunodeficiency Virus Type 1 Capsid Protein"/>
    <property type="match status" value="1"/>
</dbReference>
<dbReference type="Gene3D" id="1.10.150.90">
    <property type="entry name" value="Immunodeficiency lentiviruses, gag gene matrix protein p17"/>
    <property type="match status" value="1"/>
</dbReference>
<dbReference type="Gene3D" id="1.20.5.760">
    <property type="entry name" value="Single helix bin"/>
    <property type="match status" value="1"/>
</dbReference>
<dbReference type="Gene3D" id="4.10.60.10">
    <property type="entry name" value="Zinc finger, CCHC-type"/>
    <property type="match status" value="1"/>
</dbReference>
<dbReference type="InterPro" id="IPR045345">
    <property type="entry name" value="Gag_p24_C"/>
</dbReference>
<dbReference type="InterPro" id="IPR014817">
    <property type="entry name" value="Gag_p6"/>
</dbReference>
<dbReference type="InterPro" id="IPR000071">
    <property type="entry name" value="Lentvrl_matrix_N"/>
</dbReference>
<dbReference type="InterPro" id="IPR012344">
    <property type="entry name" value="Matrix_HIV/RSV_N"/>
</dbReference>
<dbReference type="InterPro" id="IPR050195">
    <property type="entry name" value="Primate_lentivir_Gag_pol-like"/>
</dbReference>
<dbReference type="InterPro" id="IPR008916">
    <property type="entry name" value="Retrov_capsid_C"/>
</dbReference>
<dbReference type="InterPro" id="IPR008919">
    <property type="entry name" value="Retrov_capsid_N"/>
</dbReference>
<dbReference type="InterPro" id="IPR010999">
    <property type="entry name" value="Retrovr_matrix"/>
</dbReference>
<dbReference type="InterPro" id="IPR001878">
    <property type="entry name" value="Znf_CCHC"/>
</dbReference>
<dbReference type="InterPro" id="IPR036875">
    <property type="entry name" value="Znf_CCHC_sf"/>
</dbReference>
<dbReference type="PANTHER" id="PTHR40389:SF4">
    <property type="match status" value="1"/>
</dbReference>
<dbReference type="PANTHER" id="PTHR40389">
    <property type="entry name" value="ENDOGENOUS RETROVIRUS GROUP K MEMBER 24 GAG POLYPROTEIN-RELATED"/>
    <property type="match status" value="1"/>
</dbReference>
<dbReference type="Pfam" id="PF00540">
    <property type="entry name" value="Gag_p17"/>
    <property type="match status" value="1"/>
</dbReference>
<dbReference type="Pfam" id="PF19317">
    <property type="entry name" value="Gag_p24_C"/>
    <property type="match status" value="1"/>
</dbReference>
<dbReference type="Pfam" id="PF08705">
    <property type="entry name" value="Gag_p6"/>
    <property type="match status" value="1"/>
</dbReference>
<dbReference type="Pfam" id="PF00098">
    <property type="entry name" value="zf-CCHC"/>
    <property type="match status" value="2"/>
</dbReference>
<dbReference type="PRINTS" id="PR00234">
    <property type="entry name" value="HIV1MATRIX"/>
</dbReference>
<dbReference type="SMART" id="SM00343">
    <property type="entry name" value="ZnF_C2HC"/>
    <property type="match status" value="2"/>
</dbReference>
<dbReference type="SUPFAM" id="SSF47836">
    <property type="entry name" value="Retroviral matrix proteins"/>
    <property type="match status" value="1"/>
</dbReference>
<dbReference type="SUPFAM" id="SSF47353">
    <property type="entry name" value="Retrovirus capsid dimerization domain-like"/>
    <property type="match status" value="1"/>
</dbReference>
<dbReference type="SUPFAM" id="SSF47943">
    <property type="entry name" value="Retrovirus capsid protein, N-terminal core domain"/>
    <property type="match status" value="1"/>
</dbReference>
<dbReference type="SUPFAM" id="SSF57756">
    <property type="entry name" value="Retrovirus zinc finger-like domains"/>
    <property type="match status" value="1"/>
</dbReference>
<dbReference type="PROSITE" id="PS50158">
    <property type="entry name" value="ZF_CCHC"/>
    <property type="match status" value="2"/>
</dbReference>
<gene>
    <name type="primary">gag</name>
</gene>
<evidence type="ECO:0000250" key="1"/>
<evidence type="ECO:0000250" key="2">
    <source>
        <dbReference type="UniProtKB" id="P03347"/>
    </source>
</evidence>
<evidence type="ECO:0000250" key="3">
    <source>
        <dbReference type="UniProtKB" id="P03348"/>
    </source>
</evidence>
<evidence type="ECO:0000250" key="4">
    <source>
        <dbReference type="UniProtKB" id="P03349"/>
    </source>
</evidence>
<evidence type="ECO:0000250" key="5">
    <source>
        <dbReference type="UniProtKB" id="P04591"/>
    </source>
</evidence>
<evidence type="ECO:0000250" key="6">
    <source>
        <dbReference type="UniProtKB" id="P12493"/>
    </source>
</evidence>
<evidence type="ECO:0000250" key="7">
    <source>
        <dbReference type="UniProtKB" id="P12497"/>
    </source>
</evidence>
<evidence type="ECO:0000255" key="8">
    <source>
        <dbReference type="PROSITE-ProRule" id="PRU00047"/>
    </source>
</evidence>
<evidence type="ECO:0000256" key="9">
    <source>
        <dbReference type="SAM" id="MobiDB-lite"/>
    </source>
</evidence>
<evidence type="ECO:0000305" key="10"/>
<sequence length="500" mass="55714">MGARASVLSGGKLDKWEKIRLRPGGKKKYRLKHIVWASRELERYALNPGLLETSEGCKQIIGQLQPAIQTGTEELRSLYNTVATLYCVHKGIDVKDTKEALEKMEEEQNKSKKKAQQAAADTGNNSQVSQNYPIVQNLQGQMVHQAISPRTLNAWVKVIEEKAFSPEVIPMFSALSEGATPQDLNTMLNTVGGHQAAMQMLKETINEEAAEWDRLHPVHAGPIAPGQMREPRGSDIAGTTSTLQEQIAWMTSNPPIPVGEIYKRWIIVGLNKIVRMYSPVSILDIRQGPKEPFRDYVDRFYKTLRAEQASQDVKNWMTETLLVQNANPDCKTILKALGPQATLEEMMTACQGVGGPSHKARVLAEAMSQATNSVTTAMMQRGNFKGPRKIIKCFNCGKEGHIAKNCRAPRKKGCWRCGKEGHQLKDCTERQANFLGRIWPSHKGRPGNFLQSRPEPTAPPAESFGFGEEITPSQKQEQKDKELYPLTSLKSLFGNDPLSQ</sequence>
<name>GAG_HV1EL</name>
<accession>P04592</accession>
<organism>
    <name type="scientific">Human immunodeficiency virus type 1 group M subtype D (isolate ELI)</name>
    <name type="common">HIV-1</name>
    <dbReference type="NCBI Taxonomy" id="11689"/>
    <lineage>
        <taxon>Viruses</taxon>
        <taxon>Riboviria</taxon>
        <taxon>Pararnavirae</taxon>
        <taxon>Artverviricota</taxon>
        <taxon>Revtraviricetes</taxon>
        <taxon>Ortervirales</taxon>
        <taxon>Retroviridae</taxon>
        <taxon>Orthoretrovirinae</taxon>
        <taxon>Lentivirus</taxon>
        <taxon>Human immunodeficiency virus type 1</taxon>
    </lineage>
</organism>
<organismHost>
    <name type="scientific">Homo sapiens</name>
    <name type="common">Human</name>
    <dbReference type="NCBI Taxonomy" id="9606"/>
</organismHost>
<reference key="1">
    <citation type="journal article" date="1986" name="Cell">
        <title>Genetic variability of the AIDS virus: nucleotide sequence analysis of two isolates from African patients.</title>
        <authorList>
            <person name="Alizon M."/>
            <person name="Wain-Hobson S."/>
            <person name="Montagnier L."/>
            <person name="Sonigo P."/>
        </authorList>
    </citation>
    <scope>NUCLEOTIDE SEQUENCE [GENOMIC DNA]</scope>
</reference>
<reference key="2">
    <citation type="journal article" date="2003" name="Biochim. Biophys. Acta">
        <title>Role of HIV-1 Gag domains in viral assembly.</title>
        <authorList>
            <person name="Scarlata S."/>
            <person name="Carter C."/>
        </authorList>
    </citation>
    <scope>REVIEW</scope>
</reference>
<keyword id="KW-0014">AIDS</keyword>
<keyword id="KW-0167">Capsid protein</keyword>
<keyword id="KW-1032">Host cell membrane</keyword>
<keyword id="KW-1035">Host cytoplasm</keyword>
<keyword id="KW-1039">Host endosome</keyword>
<keyword id="KW-1043">Host membrane</keyword>
<keyword id="KW-1048">Host nucleus</keyword>
<keyword id="KW-0945">Host-virus interaction</keyword>
<keyword id="KW-0449">Lipoprotein</keyword>
<keyword id="KW-0472">Membrane</keyword>
<keyword id="KW-0479">Metal-binding</keyword>
<keyword id="KW-0488">Methylation</keyword>
<keyword id="KW-0519">Myristate</keyword>
<keyword id="KW-0597">Phosphoprotein</keyword>
<keyword id="KW-1185">Reference proteome</keyword>
<keyword id="KW-0677">Repeat</keyword>
<keyword id="KW-0688">Ribosomal frameshifting</keyword>
<keyword id="KW-0694">RNA-binding</keyword>
<keyword id="KW-1198">Viral budding</keyword>
<keyword id="KW-1187">Viral budding via the host ESCRT complexes</keyword>
<keyword id="KW-0543">Viral nucleoprotein</keyword>
<keyword id="KW-1188">Viral release from host cell</keyword>
<keyword id="KW-0946">Virion</keyword>
<keyword id="KW-0862">Zinc</keyword>
<keyword id="KW-0863">Zinc-finger</keyword>
<protein>
    <recommendedName>
        <fullName>Gag polyprotein</fullName>
    </recommendedName>
    <alternativeName>
        <fullName>Pr55Gag</fullName>
    </alternativeName>
    <component>
        <recommendedName>
            <fullName>Matrix protein p17</fullName>
            <shortName>MA</shortName>
        </recommendedName>
    </component>
    <component>
        <recommendedName>
            <fullName>Capsid protein p24</fullName>
            <shortName>CA</shortName>
        </recommendedName>
    </component>
    <component>
        <recommendedName>
            <fullName evidence="6">Spacer peptide 1</fullName>
            <shortName>SP1</shortName>
        </recommendedName>
        <alternativeName>
            <fullName>p2</fullName>
        </alternativeName>
    </component>
    <component>
        <recommendedName>
            <fullName>Nucleocapsid protein p7</fullName>
            <shortName>NC</shortName>
        </recommendedName>
    </component>
    <component>
        <recommendedName>
            <fullName evidence="6">Spacer peptide 2</fullName>
            <shortName>SP2</shortName>
        </recommendedName>
        <alternativeName>
            <fullName>p1</fullName>
        </alternativeName>
    </component>
    <component>
        <recommendedName>
            <fullName>p6-gag</fullName>
        </recommendedName>
    </component>
</protein>
<comment type="function">
    <molecule>Gag polyprotein</molecule>
    <text evidence="5">Mediates, with Gag-Pol polyprotein, the essential events in virion assembly, including binding the plasma membrane, making the protein-protein interactions necessary to create spherical particles, recruiting the viral Env proteins, and packaging the genomic RNA via direct interactions with the RNA packaging sequence (Psi).</text>
</comment>
<comment type="function">
    <molecule>Matrix protein p17</molecule>
    <text evidence="1 6">Targets the polyprotein to the plasma membrane via a multipartite membrane-binding signal, that includes its myristoylated N-terminus (By similarity). Matrix protein is part of the pre-integration complex. Implicated in the release from host cell mediated by Vpu. Binds to RNA (By similarity).</text>
</comment>
<comment type="function">
    <molecule>Capsid protein p24</molecule>
    <text evidence="5 6">Forms the conical core that encapsulates the genomic RNA-nucleocapsid complex in the virion. Most core are conical, with only 7% tubular. The core is constituted by capsid protein hexamer subunits. The core is disassembled soon after virion entry (By similarity). The capsid promotes immune invasion by cloaking viral DNA from CGAS detection (By similarity). Host restriction factors such as TRIM5-alpha or TRIMCyp bind retroviral capsids and cause premature capsid disassembly, leading to blocks in reverse transcription. Capsid restriction by TRIM5 is one of the factors which restricts HIV-1 to the human species. Host PIN1 apparently facilitates the virion uncoating (By similarity). On the other hand, interactions with PDZD8 or CYPA stabilize the capsid (By similarity).</text>
</comment>
<comment type="function">
    <molecule>Nucleocapsid protein p7</molecule>
    <text evidence="5">Encapsulates and protects viral dimeric unspliced genomic RNA (gRNA). Binds these RNAs through its zinc fingers. Acts as a nucleic acid chaperone which is involved in rearangement of nucleic acid secondary structure during gRNA retrotranscription. Also facilitates template switch leading to recombination. As part of the polyprotein, participates in gRNA dimerization, packaging, tRNA incorporation and virion assembly.</text>
</comment>
<comment type="function">
    <molecule>p6-gag</molecule>
    <text evidence="6">Plays a role in budding of the assembled particle by interacting with the host class E VPS proteins TSG101 and PDCD6IP/AIP1.</text>
</comment>
<comment type="subunit">
    <molecule>Gag polyprotein</molecule>
    <text evidence="4 5">Homotrimer; further assembles as hexamers of trimers. Oligomerization possibly creates a central hole into which the cytoplasmic tail of the gp41 envelope protein may be inserted. Interacts with host TRIM22; this interaction seems to disrupt proper trafficking of Gag polyprotein and may interfere with budding. Interacts with host PDZD8. When ubiquitinated, interacts (via p6-gag domain) with host PACSIN2; this interaction allows PACSIN2 recruitment to viral assembly sites and its subsequent incorporation into virions. Interacts with MOV10 (By similarity).</text>
</comment>
<comment type="subunit">
    <molecule>Matrix protein p17</molecule>
    <text evidence="5 6">Homotrimer; further assembles as hexamers of trimers. Interacts with gp41 (via C-terminus). Interacts with host CALM1; this interaction induces a conformational change in the Matrix protein, triggering exposure of the myristate group. Interacts with host AP3D1; this interaction allows the polyprotein trafficking to multivesicular bodies during virus assembly. Part of the pre-integration complex (PIC) which is composed of viral genome, matrix protein, Vpr and integrase.</text>
</comment>
<comment type="subunit">
    <molecule>Capsid protein p24</molecule>
    <text evidence="5 6">Homodimer; the homodimer further multimerizes as homohexamers or homopentamers (By similarity). Interacts with host NUP98 (By similarity). Interacts with host PPIA/CYPA; this interaction stabilizes the capsid (By similarity). Interacts with host NUP153 (By similarity). Interacts with host PDZD8; this interaction stabilizes the capsid. Interacts with host TRIM5; this interaction destabilizes the capsid (By similarity). Interacts with host CPSF6 (By similarity). Interacts with host NONO; the interaction is weak (By similarity).</text>
</comment>
<comment type="subunit">
    <molecule>Nucleocapsid protein p7</molecule>
    <text evidence="6">Interacts with host NUP98.</text>
</comment>
<comment type="subunit">
    <molecule>p6-gag</molecule>
    <text evidence="3 6">Interacts with Vpr; this interaction allows Vpr incorporation into the virion. Interacts with host TSG101. p6-gag interacts with host PDCD6IP/AIP1.</text>
</comment>
<comment type="subcellular location">
    <molecule>Gag polyprotein</molecule>
    <subcellularLocation>
        <location evidence="6">Host cell membrane</location>
        <topology evidence="6">Lipid-anchor</topology>
    </subcellularLocation>
    <subcellularLocation>
        <location evidence="6">Host endosome</location>
        <location evidence="6">Host multivesicular body</location>
    </subcellularLocation>
    <text evidence="6">These locations are probably linked to virus assembly sites. The main location is the cell membrane, but under some circumstances, late endosomal compartments can serve as productive sites for virion assembly.</text>
</comment>
<comment type="subcellular location">
    <molecule>Matrix protein p17</molecule>
    <subcellularLocation>
        <location evidence="6">Virion membrane</location>
        <topology evidence="6">Lipid-anchor</topology>
    </subcellularLocation>
    <subcellularLocation>
        <location evidence="1">Host nucleus</location>
    </subcellularLocation>
    <subcellularLocation>
        <location evidence="1">Host cytoplasm</location>
    </subcellularLocation>
</comment>
<comment type="subcellular location">
    <molecule>Capsid protein p24</molecule>
    <subcellularLocation>
        <location evidence="6">Virion</location>
    </subcellularLocation>
</comment>
<comment type="subcellular location">
    <molecule>Nucleocapsid protein p7</molecule>
    <subcellularLocation>
        <location evidence="6">Virion</location>
    </subcellularLocation>
</comment>
<comment type="alternative products">
    <event type="ribosomal frameshifting"/>
    <isoform>
        <id>P04592-1</id>
        <name>Gag polyprotein</name>
        <sequence type="displayed"/>
    </isoform>
    <isoform>
        <id>P04589-1</id>
        <name>Gag-Pol polyprotein</name>
        <sequence type="external"/>
    </isoform>
    <text>Translation results in the formation of the Gag polyprotein most of the time. Ribosomal frameshifting at the gag-pol genes boundary occurs at low frequency and produces the Gag-Pol polyprotein. This strategy of translation probably allows the virus to modulate the quantity of each viral protein. Maintenance of a correct Gag to Gag-Pol ratio is essential for RNA dimerization and viral infectivity.</text>
</comment>
<comment type="domain">
    <text evidence="6">Late-budding domains (L domains) are short sequence motifs essential for viral particle budding. They recruit proteins of the host ESCRT machinery (Endosomal Sorting Complex Required for Transport) or ESCRT-associated proteins. p6-gag contains two L domains: a PTAP/PSAP motif, which interacts with the UEV domain of TSG101 and a LYPX(n)L motif which interacts with PDCD6IP/AIP1.</text>
</comment>
<comment type="PTM">
    <text evidence="6">Gag-Pol polyprotein: Specific enzymatic cleavages by the viral protease yield mature proteins.</text>
</comment>
<comment type="PTM">
    <molecule>Matrix protein p17</molecule>
    <text evidence="5">Tyrosine phosphorylated presumably in the virion by a host kinase. Phosphorylation is apparently not a major regulator of membrane association.</text>
</comment>
<comment type="PTM">
    <text evidence="6">Capsid protein p24 is phosphorylated possibly by host MAPK1; this phosphorylation is necessary for Pin1-mediated virion uncoating.</text>
</comment>
<comment type="PTM">
    <text evidence="2">Nucleocapsid protein p7 is methylated by host PRMT6, impairing its function by reducing RNA annealing and the initiation of reverse transcription.</text>
</comment>
<comment type="miscellaneous">
    <text>HIV-1 lineages are divided in three main groups, M (for Major), O (for Outlier), and N (for New, or Non-M, Non-O). The vast majority of strains found worldwide belong to the group M. Group O seems to be endemic to and largely confined to Cameroon and neighboring countries in West Central Africa, where these viruses represent a small minority of HIV-1 strains. The group N is represented by a limited number of isolates from Cameroonian persons. The group M is further subdivided in 9 clades or subtypes (A to D, F to H, J and K).</text>
</comment>
<comment type="miscellaneous">
    <molecule>Isoform Gag polyprotein</molecule>
    <text>Produced by conventional translation.</text>
</comment>
<comment type="similarity">
    <text evidence="10">Belongs to the primate lentivirus group gag polyprotein family.</text>
</comment>
<feature type="initiator methionine" description="Removed; by host" evidence="1">
    <location>
        <position position="1"/>
    </location>
</feature>
<feature type="chain" id="PRO_0000261214" description="Gag polyprotein">
    <location>
        <begin position="2"/>
        <end position="500"/>
    </location>
</feature>
<feature type="chain" id="PRO_0000038529" description="Matrix protein p17" evidence="1">
    <location>
        <begin position="2"/>
        <end position="132"/>
    </location>
</feature>
<feature type="chain" id="PRO_0000038530" description="Capsid protein p24" evidence="1">
    <location>
        <begin position="133"/>
        <end position="363"/>
    </location>
</feature>
<feature type="peptide" id="PRO_0000038531" description="Spacer peptide 1" evidence="1">
    <location>
        <begin position="364"/>
        <end position="378"/>
    </location>
</feature>
<feature type="chain" id="PRO_0000038532" description="Nucleocapsid protein p7" evidence="1">
    <location>
        <begin position="379"/>
        <end position="433"/>
    </location>
</feature>
<feature type="peptide" id="PRO_0000038533" description="Spacer peptide 2" evidence="1">
    <location>
        <begin position="434"/>
        <end position="449"/>
    </location>
</feature>
<feature type="chain" id="PRO_0000038534" description="p6-gag" evidence="1">
    <location>
        <begin position="450"/>
        <end position="500"/>
    </location>
</feature>
<feature type="zinc finger region" description="CCHC-type 1" evidence="8">
    <location>
        <begin position="391"/>
        <end position="408"/>
    </location>
</feature>
<feature type="zinc finger region" description="CCHC-type 2" evidence="8">
    <location>
        <begin position="412"/>
        <end position="429"/>
    </location>
</feature>
<feature type="region of interest" description="Interaction with Gp41" evidence="6">
    <location>
        <begin position="7"/>
        <end position="31"/>
    </location>
</feature>
<feature type="region of interest" description="Interaction with host CALM1" evidence="5">
    <location>
        <begin position="8"/>
        <end position="43"/>
    </location>
</feature>
<feature type="region of interest" description="Interaction with host AP3D1" evidence="7">
    <location>
        <begin position="12"/>
        <end position="19"/>
    </location>
</feature>
<feature type="region of interest" description="Interaction with membrane phosphatidylinositol 4,5-bisphosphate and RNA" evidence="6">
    <location>
        <begin position="14"/>
        <end position="33"/>
    </location>
</feature>
<feature type="region of interest" description="Interaction with membrane phosphatidylinositol 4,5-bisphosphate" evidence="6">
    <location>
        <begin position="73"/>
        <end position="77"/>
    </location>
</feature>
<feature type="region of interest" description="Disordered" evidence="9">
    <location>
        <begin position="102"/>
        <end position="128"/>
    </location>
</feature>
<feature type="region of interest" description="Interaction with host PPIA/CYPA and NUP153" evidence="6">
    <location>
        <begin position="189"/>
        <end position="227"/>
    </location>
</feature>
<feature type="region of interest" description="PPIA/CYPA-binding loop" evidence="5">
    <location>
        <begin position="217"/>
        <end position="225"/>
    </location>
</feature>
<feature type="region of interest" description="Dimerization/Multimerization of capsid protein p24" evidence="5">
    <location>
        <begin position="277"/>
        <end position="363"/>
    </location>
</feature>
<feature type="region of interest" description="Disordered" evidence="9">
    <location>
        <begin position="438"/>
        <end position="500"/>
    </location>
</feature>
<feature type="short sequence motif" description="Nuclear export signal" evidence="1">
    <location>
        <begin position="16"/>
        <end position="22"/>
    </location>
</feature>
<feature type="short sequence motif" description="Nuclear localization signal" evidence="1">
    <location>
        <begin position="26"/>
        <end position="32"/>
    </location>
</feature>
<feature type="short sequence motif" description="PTAP/PSAP motif">
    <location>
        <begin position="456"/>
        <end position="459"/>
    </location>
</feature>
<feature type="short sequence motif" description="LYPX(n)L motif">
    <location>
        <begin position="483"/>
        <end position="492"/>
    </location>
</feature>
<feature type="site" description="Cleavage; by viral protease" evidence="1">
    <location>
        <begin position="132"/>
        <end position="133"/>
    </location>
</feature>
<feature type="site" description="Cleavage; by viral protease" evidence="1">
    <location>
        <begin position="363"/>
        <end position="364"/>
    </location>
</feature>
<feature type="site" description="Cleavage; by viral protease" evidence="1">
    <location>
        <begin position="378"/>
        <end position="379"/>
    </location>
</feature>
<feature type="site" description="Cleavage; by viral protease" evidence="1">
    <location>
        <begin position="433"/>
        <end position="434"/>
    </location>
</feature>
<feature type="site" description="Cleavage; by viral protease" evidence="1">
    <location>
        <begin position="449"/>
        <end position="450"/>
    </location>
</feature>
<feature type="modified residue" description="Phosphoserine; by host MAPK1" evidence="6">
    <location>
        <position position="148"/>
    </location>
</feature>
<feature type="modified residue" description="Asymmetric dimethylarginine; in Nucleocapsid protein p7; by host PRMT6" evidence="1">
    <location>
        <position position="388"/>
    </location>
</feature>
<feature type="modified residue" description="Asymmetric dimethylarginine; in Nucleocapsid protein p7; by host PRMT6" evidence="1">
    <location>
        <position position="410"/>
    </location>
</feature>
<feature type="lipid moiety-binding region" description="N-myristoyl glycine; by host" evidence="1">
    <location>
        <position position="2"/>
    </location>
</feature>